<name>DKF1_CAEEL</name>
<sequence length="722" mass="80962">MDGSQGSTDYGDHVVLRYGGTREMVPLIRHEQMLDMLMERARQIVQGFGNLDTRNMYLFRHEYNSPTLLYPITSASQITSGSILEIILVDRTEAAVIPHVVEPESYMRPTFCDFCGEMLTGLMRQGVKCKNCNGNFHKRCSNAARNNCGAPGAPGAQPSRPPILPPIPTTPTGFPVAALSTPTGLPHTLIEHSYRQFTVCKVCDHLLVGLVKQGLKCRDCGVNVHRKCAMELASNCVLSENAISRVNFTDPEGPGSSSSDNIPLFRLPGQVGTRATEKKKLEGWMMHFILSDPERRLKHYWMMQSNAIHLYNEYSEGIGVNPNRVYRIIPLAEITSVVQNNGKSVLAKHPPHCFEIRTTTNTVFCVGEDYHAFSGGPPKKIPRSMSVRPSSNTTMWFQFIKESLQPPSRNEDNAEQALEFANLYQVLSDKTLGSGQFGTVYSAIQRHSGKEVAVKVISKERFSKKGSGAESMRAEVAILQQTCHPGIVCLEFMCETKDKIFVVMEKMNGDMLEMILSQELGRLNSRATKFLLVQILCALKYLHDQGIAHCDLKPENVLLSDMGSNFPQTKICDFGYARFIPESQFRKTVVGTPAYLPPEVLQRKGYNKSLDMWSVGVIIYVTLSGTFPFNEGEEISEQIQNASFMFPTEPWSEVEPLAVDLIQKLLKVEIEARMSIEQCLDHGWLKGEQLYRDLRDLEVRLNTPRYLTSPQDDILYGTLVNP</sequence>
<dbReference type="EC" id="2.7.11.13"/>
<dbReference type="EMBL" id="Z82077">
    <property type="protein sequence ID" value="CAB04940.1"/>
    <property type="molecule type" value="Genomic_DNA"/>
</dbReference>
<dbReference type="PIR" id="T26297">
    <property type="entry name" value="T26297"/>
</dbReference>
<dbReference type="RefSeq" id="NP_493390.1">
    <property type="nucleotide sequence ID" value="NM_060989.7"/>
</dbReference>
<dbReference type="PDB" id="6RA0">
    <property type="method" value="X-ray"/>
    <property type="resolution" value="2.26 A"/>
    <property type="chains" value="A=1-151"/>
</dbReference>
<dbReference type="PDBsum" id="6RA0"/>
<dbReference type="SMR" id="Q9XUJ7"/>
<dbReference type="BioGRID" id="38628">
    <property type="interactions" value="3"/>
</dbReference>
<dbReference type="FunCoup" id="Q9XUJ7">
    <property type="interactions" value="4"/>
</dbReference>
<dbReference type="STRING" id="6239.W09C5.5.1"/>
<dbReference type="iPTMnet" id="Q9XUJ7"/>
<dbReference type="PaxDb" id="6239-W09C5.5"/>
<dbReference type="PeptideAtlas" id="Q9XUJ7"/>
<dbReference type="EnsemblMetazoa" id="W09C5.5.1">
    <property type="protein sequence ID" value="W09C5.5.1"/>
    <property type="gene ID" value="WBGene00012352"/>
</dbReference>
<dbReference type="GeneID" id="173234"/>
<dbReference type="KEGG" id="cel:CELE_W09C5.5"/>
<dbReference type="UCSC" id="W09C5.5">
    <property type="organism name" value="c. elegans"/>
</dbReference>
<dbReference type="AGR" id="WB:WBGene00012352"/>
<dbReference type="CTD" id="173234"/>
<dbReference type="WormBase" id="W09C5.5">
    <property type="protein sequence ID" value="CE20167"/>
    <property type="gene ID" value="WBGene00012352"/>
    <property type="gene designation" value="dkf-1"/>
</dbReference>
<dbReference type="eggNOG" id="KOG4236">
    <property type="taxonomic scope" value="Eukaryota"/>
</dbReference>
<dbReference type="GeneTree" id="ENSGT00950000183024"/>
<dbReference type="HOGENOM" id="CLU_009772_0_0_1"/>
<dbReference type="InParanoid" id="Q9XUJ7"/>
<dbReference type="OMA" id="YARFIPE"/>
<dbReference type="OrthoDB" id="10252171at2759"/>
<dbReference type="PhylomeDB" id="Q9XUJ7"/>
<dbReference type="Reactome" id="R-CEL-1660661">
    <property type="pathway name" value="Sphingolipid de novo biosynthesis"/>
</dbReference>
<dbReference type="PRO" id="PR:Q9XUJ7"/>
<dbReference type="Proteomes" id="UP000001940">
    <property type="component" value="Chromosome I"/>
</dbReference>
<dbReference type="Bgee" id="WBGene00012352">
    <property type="expression patterns" value="Expressed in pharyngeal muscle cell (C elegans) and 4 other cell types or tissues"/>
</dbReference>
<dbReference type="GO" id="GO:0030424">
    <property type="term" value="C:axon"/>
    <property type="evidence" value="ECO:0000314"/>
    <property type="project" value="WormBase"/>
</dbReference>
<dbReference type="GO" id="GO:0005938">
    <property type="term" value="C:cell cortex"/>
    <property type="evidence" value="ECO:0000314"/>
    <property type="project" value="WormBase"/>
</dbReference>
<dbReference type="GO" id="GO:0005737">
    <property type="term" value="C:cytoplasm"/>
    <property type="evidence" value="ECO:0000314"/>
    <property type="project" value="WormBase"/>
</dbReference>
<dbReference type="GO" id="GO:0005829">
    <property type="term" value="C:cytosol"/>
    <property type="evidence" value="ECO:0000318"/>
    <property type="project" value="GO_Central"/>
</dbReference>
<dbReference type="GO" id="GO:0030425">
    <property type="term" value="C:dendrite"/>
    <property type="evidence" value="ECO:0000314"/>
    <property type="project" value="WormBase"/>
</dbReference>
<dbReference type="GO" id="GO:0016020">
    <property type="term" value="C:membrane"/>
    <property type="evidence" value="ECO:0000314"/>
    <property type="project" value="WormBase"/>
</dbReference>
<dbReference type="GO" id="GO:0043025">
    <property type="term" value="C:neuronal cell body"/>
    <property type="evidence" value="ECO:0000314"/>
    <property type="project" value="WormBase"/>
</dbReference>
<dbReference type="GO" id="GO:0005886">
    <property type="term" value="C:plasma membrane"/>
    <property type="evidence" value="ECO:0000314"/>
    <property type="project" value="WormBase"/>
</dbReference>
<dbReference type="GO" id="GO:0045202">
    <property type="term" value="C:synapse"/>
    <property type="evidence" value="ECO:0007669"/>
    <property type="project" value="GOC"/>
</dbReference>
<dbReference type="GO" id="GO:0005524">
    <property type="term" value="F:ATP binding"/>
    <property type="evidence" value="ECO:0007669"/>
    <property type="project" value="UniProtKB-KW"/>
</dbReference>
<dbReference type="GO" id="GO:0004697">
    <property type="term" value="F:diacylglycerol-dependent serine/threonine kinase activity"/>
    <property type="evidence" value="ECO:0007669"/>
    <property type="project" value="UniProtKB-EC"/>
</dbReference>
<dbReference type="GO" id="GO:0106310">
    <property type="term" value="F:protein serine kinase activity"/>
    <property type="evidence" value="ECO:0007669"/>
    <property type="project" value="RHEA"/>
</dbReference>
<dbReference type="GO" id="GO:0004674">
    <property type="term" value="F:protein serine/threonine kinase activity"/>
    <property type="evidence" value="ECO:0000314"/>
    <property type="project" value="WormBase"/>
</dbReference>
<dbReference type="GO" id="GO:0008270">
    <property type="term" value="F:zinc ion binding"/>
    <property type="evidence" value="ECO:0007669"/>
    <property type="project" value="UniProtKB-KW"/>
</dbReference>
<dbReference type="GO" id="GO:0002253">
    <property type="term" value="P:activation of immune response"/>
    <property type="evidence" value="ECO:0000315"/>
    <property type="project" value="UniProtKB"/>
</dbReference>
<dbReference type="GO" id="GO:0050830">
    <property type="term" value="P:defense response to Gram-positive bacterium"/>
    <property type="evidence" value="ECO:0000315"/>
    <property type="project" value="UniProtKB"/>
</dbReference>
<dbReference type="GO" id="GO:0008340">
    <property type="term" value="P:determination of adult lifespan"/>
    <property type="evidence" value="ECO:0000315"/>
    <property type="project" value="UniProtKB"/>
</dbReference>
<dbReference type="GO" id="GO:0035556">
    <property type="term" value="P:intracellular signal transduction"/>
    <property type="evidence" value="ECO:0000318"/>
    <property type="project" value="GO_Central"/>
</dbReference>
<dbReference type="GO" id="GO:0007274">
    <property type="term" value="P:neuromuscular synaptic transmission"/>
    <property type="evidence" value="ECO:0000315"/>
    <property type="project" value="WormBase"/>
</dbReference>
<dbReference type="GO" id="GO:0007200">
    <property type="term" value="P:phospholipase C-activating G protein-coupled receptor signaling pathway"/>
    <property type="evidence" value="ECO:0000318"/>
    <property type="project" value="GO_Central"/>
</dbReference>
<dbReference type="GO" id="GO:0010628">
    <property type="term" value="P:positive regulation of gene expression"/>
    <property type="evidence" value="ECO:0000315"/>
    <property type="project" value="UniProtKB"/>
</dbReference>
<dbReference type="GO" id="GO:0042307">
    <property type="term" value="P:positive regulation of protein import into nucleus"/>
    <property type="evidence" value="ECO:0000315"/>
    <property type="project" value="UniProtKB"/>
</dbReference>
<dbReference type="CDD" id="cd20797">
    <property type="entry name" value="C1_CeDKF1-like_rpt1"/>
    <property type="match status" value="1"/>
</dbReference>
<dbReference type="CDD" id="cd20798">
    <property type="entry name" value="C1_CeDKF1-like_rpt2"/>
    <property type="match status" value="1"/>
</dbReference>
<dbReference type="CDD" id="cd01239">
    <property type="entry name" value="PH_PKD"/>
    <property type="match status" value="1"/>
</dbReference>
<dbReference type="CDD" id="cd14082">
    <property type="entry name" value="STKc_PKD"/>
    <property type="match status" value="1"/>
</dbReference>
<dbReference type="FunFam" id="3.30.200.20:FF:000042">
    <property type="entry name" value="Aurora kinase A"/>
    <property type="match status" value="1"/>
</dbReference>
<dbReference type="FunFam" id="3.30.60.20:FF:000021">
    <property type="entry name" value="Serine/threonine-protein kinase"/>
    <property type="match status" value="1"/>
</dbReference>
<dbReference type="FunFam" id="1.10.510.10:FF:001289">
    <property type="entry name" value="Serine/threonine-protein kinase dkf-1"/>
    <property type="match status" value="1"/>
</dbReference>
<dbReference type="FunFam" id="3.30.60.20:FF:000080">
    <property type="entry name" value="Serine/threonine-protein kinase dkf-1"/>
    <property type="match status" value="1"/>
</dbReference>
<dbReference type="Gene3D" id="3.30.60.20">
    <property type="match status" value="2"/>
</dbReference>
<dbReference type="Gene3D" id="2.30.29.30">
    <property type="entry name" value="Pleckstrin-homology domain (PH domain)/Phosphotyrosine-binding domain (PTB)"/>
    <property type="match status" value="1"/>
</dbReference>
<dbReference type="Gene3D" id="1.10.510.10">
    <property type="entry name" value="Transferase(Phosphotransferase) domain 1"/>
    <property type="match status" value="1"/>
</dbReference>
<dbReference type="InterPro" id="IPR046349">
    <property type="entry name" value="C1-like_sf"/>
</dbReference>
<dbReference type="InterPro" id="IPR011009">
    <property type="entry name" value="Kinase-like_dom_sf"/>
</dbReference>
<dbReference type="InterPro" id="IPR002219">
    <property type="entry name" value="PE/DAG-bd"/>
</dbReference>
<dbReference type="InterPro" id="IPR011993">
    <property type="entry name" value="PH-like_dom_sf"/>
</dbReference>
<dbReference type="InterPro" id="IPR001849">
    <property type="entry name" value="PH_domain"/>
</dbReference>
<dbReference type="InterPro" id="IPR000719">
    <property type="entry name" value="Prot_kinase_dom"/>
</dbReference>
<dbReference type="InterPro" id="IPR017441">
    <property type="entry name" value="Protein_kinase_ATP_BS"/>
</dbReference>
<dbReference type="InterPro" id="IPR008271">
    <property type="entry name" value="Ser/Thr_kinase_AS"/>
</dbReference>
<dbReference type="PANTHER" id="PTHR22968">
    <property type="entry name" value="PROTEIN KINASE C, MU"/>
    <property type="match status" value="1"/>
</dbReference>
<dbReference type="PANTHER" id="PTHR22968:SF15">
    <property type="entry name" value="SERINE_THREONINE-PROTEIN KINASE DKF-1"/>
    <property type="match status" value="1"/>
</dbReference>
<dbReference type="Pfam" id="PF00130">
    <property type="entry name" value="C1_1"/>
    <property type="match status" value="2"/>
</dbReference>
<dbReference type="Pfam" id="PF00069">
    <property type="entry name" value="Pkinase"/>
    <property type="match status" value="1"/>
</dbReference>
<dbReference type="SMART" id="SM00109">
    <property type="entry name" value="C1"/>
    <property type="match status" value="2"/>
</dbReference>
<dbReference type="SMART" id="SM00233">
    <property type="entry name" value="PH"/>
    <property type="match status" value="1"/>
</dbReference>
<dbReference type="SMART" id="SM00220">
    <property type="entry name" value="S_TKc"/>
    <property type="match status" value="1"/>
</dbReference>
<dbReference type="SUPFAM" id="SSF57889">
    <property type="entry name" value="Cysteine-rich domain"/>
    <property type="match status" value="2"/>
</dbReference>
<dbReference type="SUPFAM" id="SSF50729">
    <property type="entry name" value="PH domain-like"/>
    <property type="match status" value="1"/>
</dbReference>
<dbReference type="SUPFAM" id="SSF56112">
    <property type="entry name" value="Protein kinase-like (PK-like)"/>
    <property type="match status" value="1"/>
</dbReference>
<dbReference type="PROSITE" id="PS00107">
    <property type="entry name" value="PROTEIN_KINASE_ATP"/>
    <property type="match status" value="1"/>
</dbReference>
<dbReference type="PROSITE" id="PS50011">
    <property type="entry name" value="PROTEIN_KINASE_DOM"/>
    <property type="match status" value="1"/>
</dbReference>
<dbReference type="PROSITE" id="PS00108">
    <property type="entry name" value="PROTEIN_KINASE_ST"/>
    <property type="match status" value="1"/>
</dbReference>
<dbReference type="PROSITE" id="PS00479">
    <property type="entry name" value="ZF_DAG_PE_1"/>
    <property type="match status" value="2"/>
</dbReference>
<dbReference type="PROSITE" id="PS50081">
    <property type="entry name" value="ZF_DAG_PE_2"/>
    <property type="match status" value="2"/>
</dbReference>
<keyword id="KW-0002">3D-structure</keyword>
<keyword id="KW-0067">ATP-binding</keyword>
<keyword id="KW-0963">Cytoplasm</keyword>
<keyword id="KW-0418">Kinase</keyword>
<keyword id="KW-0460">Magnesium</keyword>
<keyword id="KW-0472">Membrane</keyword>
<keyword id="KW-0479">Metal-binding</keyword>
<keyword id="KW-0547">Nucleotide-binding</keyword>
<keyword id="KW-0597">Phosphoprotein</keyword>
<keyword id="KW-1185">Reference proteome</keyword>
<keyword id="KW-0677">Repeat</keyword>
<keyword id="KW-0723">Serine/threonine-protein kinase</keyword>
<keyword id="KW-0808">Transferase</keyword>
<keyword id="KW-0832">Ubl conjugation</keyword>
<keyword id="KW-0862">Zinc</keyword>
<keyword id="KW-0863">Zinc-finger</keyword>
<protein>
    <recommendedName>
        <fullName evidence="10">Serine/threonine-protein kinase dkf-1</fullName>
        <ecNumber>2.7.11.13</ecNumber>
    </recommendedName>
</protein>
<organism>
    <name type="scientific">Caenorhabditis elegans</name>
    <dbReference type="NCBI Taxonomy" id="6239"/>
    <lineage>
        <taxon>Eukaryota</taxon>
        <taxon>Metazoa</taxon>
        <taxon>Ecdysozoa</taxon>
        <taxon>Nematoda</taxon>
        <taxon>Chromadorea</taxon>
        <taxon>Rhabditida</taxon>
        <taxon>Rhabditina</taxon>
        <taxon>Rhabditomorpha</taxon>
        <taxon>Rhabditoidea</taxon>
        <taxon>Rhabditidae</taxon>
        <taxon>Peloderinae</taxon>
        <taxon>Caenorhabditis</taxon>
    </lineage>
</organism>
<gene>
    <name type="primary">dkf-1</name>
    <name type="ORF">W09C5.5</name>
</gene>
<proteinExistence type="evidence at protein level"/>
<comment type="function">
    <text evidence="6 7 9">Converts transient diacylglycerol (DAG) signals into prolonged physiological effects, independently of PKC (PubMed:16613841, PubMed:16613842). Role in the regulation of growth and neuromuscular control of movement (PubMed:16613841, PubMed:16613842). Involved in immune response to S.aureus bacterium by activating transcription factor hlh-30 downstream of phospholipase plc-1 (PubMed:27184844).</text>
</comment>
<comment type="catalytic activity">
    <reaction evidence="6 7 8">
        <text>L-seryl-[protein] + ATP = O-phospho-L-seryl-[protein] + ADP + H(+)</text>
        <dbReference type="Rhea" id="RHEA:17989"/>
        <dbReference type="Rhea" id="RHEA-COMP:9863"/>
        <dbReference type="Rhea" id="RHEA-COMP:11604"/>
        <dbReference type="ChEBI" id="CHEBI:15378"/>
        <dbReference type="ChEBI" id="CHEBI:29999"/>
        <dbReference type="ChEBI" id="CHEBI:30616"/>
        <dbReference type="ChEBI" id="CHEBI:83421"/>
        <dbReference type="ChEBI" id="CHEBI:456216"/>
        <dbReference type="EC" id="2.7.11.13"/>
    </reaction>
</comment>
<comment type="catalytic activity">
    <reaction evidence="6 7 8">
        <text>L-threonyl-[protein] + ATP = O-phospho-L-threonyl-[protein] + ADP + H(+)</text>
        <dbReference type="Rhea" id="RHEA:46608"/>
        <dbReference type="Rhea" id="RHEA-COMP:11060"/>
        <dbReference type="Rhea" id="RHEA-COMP:11605"/>
        <dbReference type="ChEBI" id="CHEBI:15378"/>
        <dbReference type="ChEBI" id="CHEBI:30013"/>
        <dbReference type="ChEBI" id="CHEBI:30616"/>
        <dbReference type="ChEBI" id="CHEBI:61977"/>
        <dbReference type="ChEBI" id="CHEBI:456216"/>
        <dbReference type="EC" id="2.7.11.13"/>
    </reaction>
</comment>
<comment type="cofactor">
    <cofactor evidence="6 7 8">
        <name>Mg(2+)</name>
        <dbReference type="ChEBI" id="CHEBI:18420"/>
    </cofactor>
</comment>
<comment type="activity regulation">
    <text evidence="6 7">Activated by DAG and phorbol esters. Phorbol-ester/DAG-type domain 1 binds phorbol ester with high affinity and mediates accumulation at the cell periphery. Phorbol-ester/DAG-type domain 2 binds phorbol ester with low affinity but may mediate initial contact, resulting in a conformational change allowing previously occluded domain 1 to anchor the kinase. Phosphorylation on Thr-588 is then also required for activation and may also result in a further conformational change.</text>
</comment>
<comment type="subcellular location">
    <subcellularLocation>
        <location evidence="6 7">Cytoplasm</location>
    </subcellularLocation>
    <subcellularLocation>
        <location evidence="6 7">Membrane</location>
    </subcellularLocation>
    <text evidence="6 7">Translocation to the cell membrane is required for kinase activation. On activation, the protein may migrate back to the cytoplasm.</text>
</comment>
<comment type="tissue specificity">
    <text evidence="6">Highly expressed in embryos and at lower levels through the four larval stages in adults. Present in a region bounded by the anterior and posterior bulbs of the pharynx and an area of the tail containing the lumbar, dorsorectal and pre-anal ganglia. Expressed in neurons.</text>
</comment>
<comment type="domain">
    <text evidence="7">The PH domain inhibits PKD catalytic activity in the absence of DAG, either by direct steric occlusion or distortion of the PKD catalytic cleft.</text>
</comment>
<comment type="PTM">
    <text evidence="6 7">Prolonged phosphorylation at Thr-588 results in ubiquitination and degradation.</text>
</comment>
<comment type="disruption phenotype">
    <text evidence="6 9">Loss of movement due to severe or complete loss of muscle contraction near the anus resulting in partial paralysis of the tail region (PubMed:16613841). RNAi-mediated knockdown results in a shortened lifespan, prevents transcription factor hlh-30 nuclear translocation during S.aureus infection and reduces survival following infection (PubMed:27184844).</text>
</comment>
<comment type="similarity">
    <text evidence="2">Belongs to the protein kinase superfamily. CAMK Ser/Thr protein kinase family. PKD subfamily.</text>
</comment>
<feature type="chain" id="PRO_0000385352" description="Serine/threonine-protein kinase dkf-1">
    <location>
        <begin position="1"/>
        <end position="722"/>
    </location>
</feature>
<feature type="domain" description="PH" evidence="2">
    <location>
        <begin position="279"/>
        <end position="407"/>
    </location>
</feature>
<feature type="domain" description="Protein kinase" evidence="3">
    <location>
        <begin position="426"/>
        <end position="685"/>
    </location>
</feature>
<feature type="zinc finger region" description="Phorbol-ester/DAG-type 1" evidence="4">
    <location>
        <begin position="98"/>
        <end position="148"/>
    </location>
</feature>
<feature type="zinc finger region" description="Phorbol-ester/DAG-type 2" evidence="4">
    <location>
        <begin position="186"/>
        <end position="236"/>
    </location>
</feature>
<feature type="active site" description="Proton acceptor" evidence="1 3 5">
    <location>
        <position position="551"/>
    </location>
</feature>
<feature type="binding site" evidence="1 3">
    <location>
        <begin position="432"/>
        <end position="440"/>
    </location>
    <ligand>
        <name>ATP</name>
        <dbReference type="ChEBI" id="CHEBI:30616"/>
    </ligand>
</feature>
<feature type="binding site" evidence="3 6">
    <location>
        <position position="455"/>
    </location>
    <ligand>
        <name>ATP</name>
        <dbReference type="ChEBI" id="CHEBI:30616"/>
    </ligand>
</feature>
<feature type="modified residue" description="Phosphothreonine" evidence="6 7">
    <location>
        <position position="588"/>
    </location>
</feature>
<feature type="mutagenesis site" description="Loss of sensitivity to phorbol ester or DAG stimulation of kinase activity. Loss of sensitivity to phorbol ester or DAG stimulation of kinase activity; when associated with G-197." evidence="7">
    <original>P</original>
    <variation>G</variation>
    <location>
        <position position="109"/>
    </location>
</feature>
<feature type="mutagenesis site" description="Increase in sensitivity to phorbol ester or DAG stimulation of kinase activity. Loss of sensitivity to phorbol ester or DAG stimulation of kinase activity; when associated with G-109." evidence="7">
    <original>F</original>
    <variation>G</variation>
    <location>
        <position position="197"/>
    </location>
</feature>
<feature type="mutagenesis site" description="Increase in sensitivity to phorbol ester-stimulation of kinase activity." evidence="7">
    <original>K</original>
    <variation>A</variation>
    <location>
        <position position="298"/>
    </location>
</feature>
<feature type="mutagenesis site" description="Increase in sensitivity to phorbol ester-stimulation of kinase activity." evidence="7">
    <original>W</original>
    <variation>A</variation>
    <location>
        <position position="396"/>
    </location>
</feature>
<feature type="mutagenesis site" description="Loss of kinase activity." evidence="6">
    <original>K</original>
    <variation>Q</variation>
    <location>
        <position position="455"/>
    </location>
</feature>
<feature type="mutagenesis site" description="Loss of basal kinase activity and phorbol ester-stimulated kinase activity. Resistant to proteasome-mediated degradation." evidence="6 7">
    <original>T</original>
    <variation>A</variation>
    <location>
        <position position="588"/>
    </location>
</feature>
<feature type="mutagenesis site" description="High basal kinase activity, loss of phorbol ester-stimulated kinase activity." evidence="6 7">
    <original>T</original>
    <variation>D</variation>
    <location>
        <position position="588"/>
    </location>
</feature>
<feature type="mutagenesis site" description="High basal kinase activity, loss of phorbol ester-stimulated kinase activity." evidence="6 7">
    <original>T</original>
    <variation>E</variation>
    <location>
        <position position="588"/>
    </location>
</feature>
<feature type="mutagenesis site" description="No effect on basal kinase activity, phorbol ester-stimulated kinase activity, or stability." evidence="6 7">
    <original>T</original>
    <variation>S</variation>
    <location>
        <position position="588"/>
    </location>
</feature>
<feature type="strand" evidence="12">
    <location>
        <begin position="13"/>
        <end position="18"/>
    </location>
</feature>
<feature type="strand" evidence="12">
    <location>
        <begin position="21"/>
        <end position="26"/>
    </location>
</feature>
<feature type="helix" evidence="12">
    <location>
        <begin position="33"/>
        <end position="49"/>
    </location>
</feature>
<feature type="strand" evidence="12">
    <location>
        <begin position="56"/>
        <end position="62"/>
    </location>
</feature>
<feature type="strand" evidence="12">
    <location>
        <begin position="65"/>
        <end position="71"/>
    </location>
</feature>
<feature type="helix" evidence="12">
    <location>
        <begin position="75"/>
        <end position="77"/>
    </location>
</feature>
<feature type="strand" evidence="12">
    <location>
        <begin position="83"/>
        <end position="88"/>
    </location>
</feature>
<feature type="strand" evidence="12">
    <location>
        <begin position="101"/>
        <end position="104"/>
    </location>
</feature>
<feature type="turn" evidence="12">
    <location>
        <begin position="113"/>
        <end position="115"/>
    </location>
</feature>
<feature type="strand" evidence="12">
    <location>
        <begin position="121"/>
        <end position="123"/>
    </location>
</feature>
<feature type="strand" evidence="12">
    <location>
        <begin position="126"/>
        <end position="129"/>
    </location>
</feature>
<feature type="turn" evidence="12">
    <location>
        <begin position="130"/>
        <end position="132"/>
    </location>
</feature>
<feature type="helix" evidence="12">
    <location>
        <begin position="138"/>
        <end position="140"/>
    </location>
</feature>
<evidence type="ECO:0000250" key="1">
    <source>
        <dbReference type="UniProtKB" id="P28523"/>
    </source>
</evidence>
<evidence type="ECO:0000255" key="2"/>
<evidence type="ECO:0000255" key="3">
    <source>
        <dbReference type="PROSITE-ProRule" id="PRU00159"/>
    </source>
</evidence>
<evidence type="ECO:0000255" key="4">
    <source>
        <dbReference type="PROSITE-ProRule" id="PRU00226"/>
    </source>
</evidence>
<evidence type="ECO:0000255" key="5">
    <source>
        <dbReference type="PROSITE-ProRule" id="PRU10027"/>
    </source>
</evidence>
<evidence type="ECO:0000269" key="6">
    <source>
    </source>
</evidence>
<evidence type="ECO:0000269" key="7">
    <source>
    </source>
</evidence>
<evidence type="ECO:0000269" key="8">
    <source>
    </source>
</evidence>
<evidence type="ECO:0000269" key="9">
    <source>
    </source>
</evidence>
<evidence type="ECO:0000303" key="10">
    <source>
    </source>
</evidence>
<evidence type="ECO:0000305" key="11"/>
<evidence type="ECO:0007829" key="12">
    <source>
        <dbReference type="PDB" id="6RA0"/>
    </source>
</evidence>
<accession>Q9XUJ7</accession>
<reference evidence="11" key="1">
    <citation type="journal article" date="2006" name="J. Biol. Chem.">
        <title>Characterization of a novel protein kinase D: Caenorhabditis elegans DKF-1 is activated by translocation-phosphorylation and regulates movement and growth in vivo.</title>
        <authorList>
            <person name="Feng H."/>
            <person name="Ren M."/>
            <person name="Wu S.-L."/>
            <person name="Hall D.H."/>
            <person name="Rubin C.S."/>
        </authorList>
    </citation>
    <scope>NUCLEOTIDE SEQUENCE [MRNA]</scope>
    <scope>FUNCTION</scope>
    <scope>ACTIVITY REGULATION</scope>
    <scope>SUBCELLULAR LOCATION</scope>
    <scope>TISSUE SPECIFICITY</scope>
    <scope>DISRUPTION PHENOTYPE</scope>
    <scope>MUTAGENESIS OF LYS-455 AND THR-588</scope>
    <scope>PHOSPHORYLATION AT THR-588</scope>
</reference>
<reference key="2">
    <citation type="journal article" date="1998" name="Science">
        <title>Genome sequence of the nematode C. elegans: a platform for investigating biology.</title>
        <authorList>
            <consortium name="The C. elegans sequencing consortium"/>
        </authorList>
    </citation>
    <scope>NUCLEOTIDE SEQUENCE [LARGE SCALE GENOMIC DNA]</scope>
    <source>
        <strain>Bristol N2</strain>
    </source>
</reference>
<reference evidence="11" key="3">
    <citation type="journal article" date="2006" name="J. Biol. Chem.">
        <title>Conserved domains subserve novel mechanisms and functions in DKF-1, a Caenorhabditis elegans protein kinase D.</title>
        <authorList>
            <person name="Feng H."/>
            <person name="Ren M."/>
            <person name="Rubin C.S."/>
        </authorList>
    </citation>
    <scope>FUNCTION</scope>
    <scope>ACTIVITY REGULATION</scope>
    <scope>SUBCELLULAR LOCATION</scope>
    <scope>DOMAIN</scope>
    <scope>PHOSPHORYLATION AT THR-588</scope>
    <scope>UBIQUITINATION</scope>
    <scope>MUTAGENESIS OF PRO-109; PHE-197; LYS-298; TRP-396 AND THR-588</scope>
</reference>
<reference evidence="11" key="4">
    <citation type="journal article" date="2007" name="J. Biol. Chem.">
        <title>Properties, regulation, and in vivo functions of a novel protein kinase D: Caenorhabditis elegans DKF-2 links diacylglycerol second messenger to the regulation of stress responses and life span.</title>
        <authorList>
            <person name="Feng H."/>
            <person name="Ren M."/>
            <person name="Chen L."/>
            <person name="Rubin C.S."/>
        </authorList>
    </citation>
    <scope>ENZYME ACTIVITY</scope>
</reference>
<reference key="5">
    <citation type="journal article" date="2016" name="Cell Rep.">
        <title>An evolutionarily conserved PLC-PKD-TFEB pathway for host defense.</title>
        <authorList>
            <person name="Najibi M."/>
            <person name="Labed S.A."/>
            <person name="Visvikis O."/>
            <person name="Irazoqui J.E."/>
        </authorList>
    </citation>
    <scope>FUNCTION</scope>
    <scope>DISRUPTION PHENOTYPE</scope>
</reference>